<accession>P38564</accession>
<name>MNB1A_MAIZE</name>
<comment type="function">
    <text>Transcription factor that binds specifically to a 5'-AA[AG]G-3' consensus core sequence at the MNF1-binding site.</text>
</comment>
<comment type="subcellular location">
    <subcellularLocation>
        <location evidence="4">Nucleus</location>
    </subcellularLocation>
</comment>
<comment type="tissue specificity">
    <text>Expressed in all tissues examined.</text>
</comment>
<feature type="chain" id="PRO_0000074299" description="Dof zinc finger protein MNB1A">
    <location>
        <begin position="1"/>
        <end position="238"/>
    </location>
</feature>
<feature type="zinc finger region" description="Dof-type" evidence="1">
    <location>
        <begin position="47"/>
        <end position="101"/>
    </location>
</feature>
<feature type="region of interest" description="Disordered" evidence="2">
    <location>
        <begin position="1"/>
        <end position="48"/>
    </location>
</feature>
<feature type="region of interest" description="Disordered" evidence="2">
    <location>
        <begin position="85"/>
        <end position="155"/>
    </location>
</feature>
<feature type="compositionally biased region" description="Low complexity" evidence="2">
    <location>
        <begin position="1"/>
        <end position="13"/>
    </location>
</feature>
<feature type="compositionally biased region" description="Basic residues" evidence="2">
    <location>
        <begin position="119"/>
        <end position="130"/>
    </location>
</feature>
<feature type="compositionally biased region" description="Low complexity" evidence="2">
    <location>
        <begin position="138"/>
        <end position="155"/>
    </location>
</feature>
<feature type="binding site" evidence="1">
    <location>
        <position position="49"/>
    </location>
    <ligand>
        <name>Zn(2+)</name>
        <dbReference type="ChEBI" id="CHEBI:29105"/>
    </ligand>
</feature>
<feature type="binding site" evidence="1">
    <location>
        <position position="52"/>
    </location>
    <ligand>
        <name>Zn(2+)</name>
        <dbReference type="ChEBI" id="CHEBI:29105"/>
    </ligand>
</feature>
<feature type="binding site" evidence="1">
    <location>
        <position position="74"/>
    </location>
    <ligand>
        <name>Zn(2+)</name>
        <dbReference type="ChEBI" id="CHEBI:29105"/>
    </ligand>
</feature>
<feature type="binding site" evidence="1">
    <location>
        <position position="77"/>
    </location>
    <ligand>
        <name>Zn(2+)</name>
        <dbReference type="ChEBI" id="CHEBI:29105"/>
    </ligand>
</feature>
<feature type="mutagenesis site" description="Abolishes DNA binding." evidence="3">
    <original>C</original>
    <variation>S</variation>
    <location>
        <position position="49"/>
    </location>
</feature>
<feature type="mutagenesis site" description="Abolishes DNA binding." evidence="3">
    <original>C</original>
    <variation>A</variation>
    <location>
        <position position="52"/>
    </location>
</feature>
<feature type="mutagenesis site" description="No effect on DNA binding." evidence="3">
    <original>C</original>
    <variation>S</variation>
    <location>
        <position position="60"/>
    </location>
</feature>
<sequence length="238" mass="24797">MQEASSAAAAGAEPGRRAAQHQFAGVDLRRPKGYAAPAPAPAVGEGDPCPRCASRDTKFCYYNNYNTSQPRHFCKGCRRYWTKGGTLRNVPVGGGTRKKPSSSSSSSSYVAAADADRQPKKKPASKKRRVVAPAPELATAADPGKTATTTTTTSEITTETGALEDSDSLAHLLLQPGTEDAEAVALGLGLSDFPSAGKAVLDDEDSFVWPAASFDMGACWAGAGFADPDPACIFLNLP</sequence>
<proteinExistence type="evidence at protein level"/>
<organism>
    <name type="scientific">Zea mays</name>
    <name type="common">Maize</name>
    <dbReference type="NCBI Taxonomy" id="4577"/>
    <lineage>
        <taxon>Eukaryota</taxon>
        <taxon>Viridiplantae</taxon>
        <taxon>Streptophyta</taxon>
        <taxon>Embryophyta</taxon>
        <taxon>Tracheophyta</taxon>
        <taxon>Spermatophyta</taxon>
        <taxon>Magnoliopsida</taxon>
        <taxon>Liliopsida</taxon>
        <taxon>Poales</taxon>
        <taxon>Poaceae</taxon>
        <taxon>PACMAD clade</taxon>
        <taxon>Panicoideae</taxon>
        <taxon>Andropogonodae</taxon>
        <taxon>Andropogoneae</taxon>
        <taxon>Tripsacinae</taxon>
        <taxon>Zea</taxon>
    </lineage>
</organism>
<protein>
    <recommendedName>
        <fullName>Dof zinc finger protein MNB1A</fullName>
    </recommendedName>
</protein>
<dbReference type="EMBL" id="X66076">
    <property type="protein sequence ID" value="CAA46875.1"/>
    <property type="molecule type" value="mRNA"/>
</dbReference>
<dbReference type="PIR" id="S66358">
    <property type="entry name" value="S66358"/>
</dbReference>
<dbReference type="RefSeq" id="NP_001105709.1">
    <property type="nucleotide sequence ID" value="NM_001112239.1"/>
</dbReference>
<dbReference type="FunCoup" id="P38564">
    <property type="interactions" value="518"/>
</dbReference>
<dbReference type="STRING" id="4577.P38564"/>
<dbReference type="MaizeGDB" id="60791"/>
<dbReference type="InParanoid" id="P38564"/>
<dbReference type="Proteomes" id="UP000007305">
    <property type="component" value="Unplaced"/>
</dbReference>
<dbReference type="ExpressionAtlas" id="P38564">
    <property type="expression patterns" value="baseline and differential"/>
</dbReference>
<dbReference type="GO" id="GO:0005634">
    <property type="term" value="C:nucleus"/>
    <property type="evidence" value="ECO:0000314"/>
    <property type="project" value="AgBase"/>
</dbReference>
<dbReference type="GO" id="GO:0003677">
    <property type="term" value="F:DNA binding"/>
    <property type="evidence" value="ECO:0000315"/>
    <property type="project" value="AgBase"/>
</dbReference>
<dbReference type="GO" id="GO:0003700">
    <property type="term" value="F:DNA-binding transcription factor activity"/>
    <property type="evidence" value="ECO:0000304"/>
    <property type="project" value="AgBase"/>
</dbReference>
<dbReference type="GO" id="GO:0000976">
    <property type="term" value="F:transcription cis-regulatory region binding"/>
    <property type="evidence" value="ECO:0000314"/>
    <property type="project" value="AgBase"/>
</dbReference>
<dbReference type="GO" id="GO:0008270">
    <property type="term" value="F:zinc ion binding"/>
    <property type="evidence" value="ECO:0000315"/>
    <property type="project" value="AgBase"/>
</dbReference>
<dbReference type="GO" id="GO:0006355">
    <property type="term" value="P:regulation of DNA-templated transcription"/>
    <property type="evidence" value="ECO:0000304"/>
    <property type="project" value="AgBase"/>
</dbReference>
<dbReference type="InterPro" id="IPR045174">
    <property type="entry name" value="Dof"/>
</dbReference>
<dbReference type="InterPro" id="IPR003851">
    <property type="entry name" value="Znf_Dof"/>
</dbReference>
<dbReference type="PANTHER" id="PTHR31992">
    <property type="entry name" value="DOF ZINC FINGER PROTEIN DOF1.4-RELATED"/>
    <property type="match status" value="1"/>
</dbReference>
<dbReference type="PANTHER" id="PTHR31992:SF292">
    <property type="entry name" value="DOF ZINC FINGER PROTEIN MNB1A"/>
    <property type="match status" value="1"/>
</dbReference>
<dbReference type="Pfam" id="PF02701">
    <property type="entry name" value="Zn_ribbon_Dof"/>
    <property type="match status" value="1"/>
</dbReference>
<dbReference type="PROSITE" id="PS01361">
    <property type="entry name" value="ZF_DOF_1"/>
    <property type="match status" value="1"/>
</dbReference>
<dbReference type="PROSITE" id="PS50884">
    <property type="entry name" value="ZF_DOF_2"/>
    <property type="match status" value="1"/>
</dbReference>
<keyword id="KW-0238">DNA-binding</keyword>
<keyword id="KW-0479">Metal-binding</keyword>
<keyword id="KW-0539">Nucleus</keyword>
<keyword id="KW-1185">Reference proteome</keyword>
<keyword id="KW-0804">Transcription</keyword>
<keyword id="KW-0805">Transcription regulation</keyword>
<keyword id="KW-0862">Zinc</keyword>
<keyword id="KW-0863">Zinc-finger</keyword>
<evidence type="ECO:0000255" key="1">
    <source>
        <dbReference type="PROSITE-ProRule" id="PRU00071"/>
    </source>
</evidence>
<evidence type="ECO:0000256" key="2">
    <source>
        <dbReference type="SAM" id="MobiDB-lite"/>
    </source>
</evidence>
<evidence type="ECO:0000269" key="3">
    <source>
    </source>
</evidence>
<evidence type="ECO:0000305" key="4"/>
<reference key="1">
    <citation type="journal article" date="1993" name="J. Biol. Chem.">
        <title>Molecular cloning of two DNA-binding proteins of maize that are structurally different but interact with the same sequence motif.</title>
        <authorList>
            <person name="Yanagisawa S."/>
            <person name="Izui K."/>
        </authorList>
    </citation>
    <scope>NUCLEOTIDE SEQUENCE [MRNA]</scope>
    <source>
        <strain>cv. H84</strain>
        <tissue>Green leaf</tissue>
    </source>
</reference>
<reference key="2">
    <citation type="journal article" date="1995" name="Nucleic Acids Res.">
        <title>A novel DNA-binding domain that may form a single zinc finger motif.</title>
        <authorList>
            <person name="Yanagisawa S."/>
        </authorList>
    </citation>
    <scope>SEQUENCE REVISION</scope>
    <scope>MUTAGENESIS OF CYS-49; CYS-52 AND CYS-60</scope>
    <source>
        <strain>cv. H84</strain>
        <tissue>Green leaf</tissue>
    </source>
</reference>
<gene>
    <name type="primary">MNB1A</name>
</gene>